<keyword id="KW-0539">Nucleus</keyword>
<keyword id="KW-1185">Reference proteome</keyword>
<keyword id="KW-0677">Repeat</keyword>
<accession>Q8GYL9</accession>
<accession>Q9LVJ9</accession>
<accession>Q9LVK0</accession>
<organism>
    <name type="scientific">Arabidopsis thaliana</name>
    <name type="common">Mouse-ear cress</name>
    <dbReference type="NCBI Taxonomy" id="3702"/>
    <lineage>
        <taxon>Eukaryota</taxon>
        <taxon>Viridiplantae</taxon>
        <taxon>Streptophyta</taxon>
        <taxon>Embryophyta</taxon>
        <taxon>Tracheophyta</taxon>
        <taxon>Spermatophyta</taxon>
        <taxon>Magnoliopsida</taxon>
        <taxon>eudicotyledons</taxon>
        <taxon>Gunneridae</taxon>
        <taxon>Pentapetalae</taxon>
        <taxon>rosids</taxon>
        <taxon>malvids</taxon>
        <taxon>Brassicales</taxon>
        <taxon>Brassicaceae</taxon>
        <taxon>Camelineae</taxon>
        <taxon>Arabidopsis</taxon>
    </lineage>
</organism>
<name>BRXL2_ARATH</name>
<evidence type="ECO:0000250" key="1"/>
<evidence type="ECO:0000255" key="2">
    <source>
        <dbReference type="PROSITE-ProRule" id="PRU00847"/>
    </source>
</evidence>
<evidence type="ECO:0000256" key="3">
    <source>
        <dbReference type="SAM" id="MobiDB-lite"/>
    </source>
</evidence>
<evidence type="ECO:0000269" key="4">
    <source>
    </source>
</evidence>
<evidence type="ECO:0000305" key="5"/>
<feature type="chain" id="PRO_0000373823" description="Protein Brevis radix-like 2">
    <location>
        <begin position="1"/>
        <end position="374"/>
    </location>
</feature>
<feature type="domain" description="BRX 1" evidence="2">
    <location>
        <begin position="143"/>
        <end position="198"/>
    </location>
</feature>
<feature type="domain" description="BRX 2" evidence="2">
    <location>
        <begin position="319"/>
        <end position="374"/>
    </location>
</feature>
<feature type="region of interest" description="Disordered" evidence="3">
    <location>
        <begin position="12"/>
        <end position="43"/>
    </location>
</feature>
<feature type="region of interest" description="Disordered" evidence="3">
    <location>
        <begin position="57"/>
        <end position="80"/>
    </location>
</feature>
<feature type="region of interest" description="Disordered" evidence="3">
    <location>
        <begin position="205"/>
        <end position="316"/>
    </location>
</feature>
<feature type="compositionally biased region" description="Polar residues" evidence="3">
    <location>
        <begin position="65"/>
        <end position="80"/>
    </location>
</feature>
<feature type="compositionally biased region" description="Polar residues" evidence="3">
    <location>
        <begin position="246"/>
        <end position="259"/>
    </location>
</feature>
<feature type="compositionally biased region" description="Polar residues" evidence="3">
    <location>
        <begin position="267"/>
        <end position="288"/>
    </location>
</feature>
<feature type="compositionally biased region" description="Basic and acidic residues" evidence="3">
    <location>
        <begin position="289"/>
        <end position="307"/>
    </location>
</feature>
<proteinExistence type="evidence at transcript level"/>
<comment type="subcellular location">
    <subcellularLocation>
        <location evidence="1">Nucleus</location>
    </subcellularLocation>
</comment>
<comment type="tissue specificity">
    <text evidence="4">Expressed in roots.</text>
</comment>
<comment type="disruption phenotype">
    <text evidence="4">No visible phenotype.</text>
</comment>
<comment type="similarity">
    <text evidence="5">Belongs to the BRX family.</text>
</comment>
<comment type="sequence caution" evidence="5">
    <conflict type="erroneous gene model prediction">
        <sequence resource="EMBL-CDS" id="BAB02330"/>
    </conflict>
</comment>
<comment type="sequence caution" evidence="5">
    <conflict type="erroneous gene model prediction">
        <sequence resource="EMBL-CDS" id="BAB02331"/>
    </conflict>
</comment>
<sequence>MLTCIACTKQLNTNNGGSKKQEEDEEEEDRVIETPRSKQIKSLTSQIKDMAVKASGAYKSCKPCSGSSNQNKNRSYADSDVASNSGRFRYAYKRAGSGSSTPKILGKEMESRLKGFLSGEGTPESMSGRTESTVFMEEEDELKEWVAQVEPGVLITFVSLPEGGNDMKRIRFSREMFDKWQAQKWWAENFDKVMELYNVQQFNQQSVPLPTPPRSEDGSSRIQSTKNGPATPPLNKECSRGKGYASSGSLAHQPTTQTQSRHHDSSGLATTPKLSSISGTKTETSSVDESARSSFSREEEEADHSGEELSVSNASDIETEWVEQDEAGVYITIRALPDGTRELRRVRFSREKFGETNARLWWEQNRARIQQQYL</sequence>
<gene>
    <name type="primary">BRXL2</name>
    <name type="ordered locus">At3g14000</name>
    <name type="ORF">MDC16.12</name>
    <name type="ORF">MDC16.13</name>
</gene>
<reference key="1">
    <citation type="journal article" date="2000" name="DNA Res.">
        <title>Structural analysis of Arabidopsis thaliana chromosome 3. I. Sequence features of the regions of 4,504,864 bp covered by sixty P1 and TAC clones.</title>
        <authorList>
            <person name="Sato S."/>
            <person name="Nakamura Y."/>
            <person name="Kaneko T."/>
            <person name="Katoh T."/>
            <person name="Asamizu E."/>
            <person name="Tabata S."/>
        </authorList>
    </citation>
    <scope>NUCLEOTIDE SEQUENCE [LARGE SCALE GENOMIC DNA]</scope>
    <source>
        <strain>cv. Columbia</strain>
    </source>
</reference>
<reference key="2">
    <citation type="journal article" date="2017" name="Plant J.">
        <title>Araport11: a complete reannotation of the Arabidopsis thaliana reference genome.</title>
        <authorList>
            <person name="Cheng C.Y."/>
            <person name="Krishnakumar V."/>
            <person name="Chan A.P."/>
            <person name="Thibaud-Nissen F."/>
            <person name="Schobel S."/>
            <person name="Town C.D."/>
        </authorList>
    </citation>
    <scope>GENOME REANNOTATION</scope>
    <source>
        <strain>cv. Columbia</strain>
    </source>
</reference>
<reference key="3">
    <citation type="journal article" date="2002" name="Science">
        <title>Functional annotation of a full-length Arabidopsis cDNA collection.</title>
        <authorList>
            <person name="Seki M."/>
            <person name="Narusaka M."/>
            <person name="Kamiya A."/>
            <person name="Ishida J."/>
            <person name="Satou M."/>
            <person name="Sakurai T."/>
            <person name="Nakajima M."/>
            <person name="Enju A."/>
            <person name="Akiyama K."/>
            <person name="Oono Y."/>
            <person name="Muramatsu M."/>
            <person name="Hayashizaki Y."/>
            <person name="Kawai J."/>
            <person name="Carninci P."/>
            <person name="Itoh M."/>
            <person name="Ishii Y."/>
            <person name="Arakawa T."/>
            <person name="Shibata K."/>
            <person name="Shinagawa A."/>
            <person name="Shinozaki K."/>
        </authorList>
    </citation>
    <scope>NUCLEOTIDE SEQUENCE [LARGE SCALE MRNA]</scope>
    <source>
        <strain>cv. Columbia</strain>
    </source>
</reference>
<reference key="4">
    <citation type="submission" date="2006-09" db="EMBL/GenBank/DDBJ databases">
        <title>Arabidopsis ORF clones.</title>
        <authorList>
            <person name="Bautista V.R."/>
            <person name="Kim C.J."/>
            <person name="Chen H."/>
            <person name="Quinitio C."/>
            <person name="Ecker J.R."/>
        </authorList>
    </citation>
    <scope>NUCLEOTIDE SEQUENCE [LARGE SCALE MRNA]</scope>
    <source>
        <strain>cv. Columbia</strain>
    </source>
</reference>
<reference key="5">
    <citation type="journal article" date="2004" name="Genes Dev.">
        <title>Natural genetic variation in Arabidopsis identifies BREVIS RADIX, a novel regulator of cell proliferation and elongation in the root.</title>
        <authorList>
            <person name="Mouchel C.F."/>
            <person name="Briggs G.C."/>
            <person name="Hardtke C.S."/>
        </authorList>
    </citation>
    <scope>IDENTIFICATION</scope>
</reference>
<reference key="6">
    <citation type="journal article" date="2006" name="Plant Physiol.">
        <title>Characterization of the plant-specific BREVIS RADIX gene family reveals limited genetic redundancy despite high sequence conservation.</title>
        <authorList>
            <person name="Briggs G.C."/>
            <person name="Mouchel C.F."/>
            <person name="Hardtke C.S."/>
        </authorList>
    </citation>
    <scope>GENE FAMILY</scope>
    <scope>DISRUPTION PHENOTYPE</scope>
    <scope>TISSUE SPECIFICITY</scope>
</reference>
<dbReference type="EMBL" id="AB019229">
    <property type="protein sequence ID" value="BAB02330.1"/>
    <property type="status" value="ALT_SEQ"/>
    <property type="molecule type" value="Genomic_DNA"/>
</dbReference>
<dbReference type="EMBL" id="AB019229">
    <property type="protein sequence ID" value="BAB02331.1"/>
    <property type="status" value="ALT_SEQ"/>
    <property type="molecule type" value="Genomic_DNA"/>
</dbReference>
<dbReference type="EMBL" id="CP002686">
    <property type="protein sequence ID" value="AEE75450.1"/>
    <property type="molecule type" value="Genomic_DNA"/>
</dbReference>
<dbReference type="EMBL" id="CP002686">
    <property type="protein sequence ID" value="AEE75451.1"/>
    <property type="molecule type" value="Genomic_DNA"/>
</dbReference>
<dbReference type="EMBL" id="AK117522">
    <property type="protein sequence ID" value="BAC42185.1"/>
    <property type="molecule type" value="mRNA"/>
</dbReference>
<dbReference type="EMBL" id="BT029002">
    <property type="protein sequence ID" value="ABI93911.1"/>
    <property type="molecule type" value="mRNA"/>
</dbReference>
<dbReference type="SMR" id="Q8GYL9"/>
<dbReference type="BioGRID" id="5948">
    <property type="interactions" value="2"/>
</dbReference>
<dbReference type="FunCoup" id="Q8GYL9">
    <property type="interactions" value="958"/>
</dbReference>
<dbReference type="STRING" id="3702.Q8GYL9"/>
<dbReference type="GlyGen" id="Q8GYL9">
    <property type="glycosylation" value="1 site"/>
</dbReference>
<dbReference type="iPTMnet" id="Q8GYL9"/>
<dbReference type="PaxDb" id="3702-AT3G14000.2"/>
<dbReference type="ProteomicsDB" id="240481"/>
<dbReference type="EnsemblPlants" id="AT3G14000.1">
    <property type="protein sequence ID" value="AT3G14000.1"/>
    <property type="gene ID" value="AT3G14000"/>
</dbReference>
<dbReference type="EnsemblPlants" id="AT3G14000.2">
    <property type="protein sequence ID" value="AT3G14000.2"/>
    <property type="gene ID" value="AT3G14000"/>
</dbReference>
<dbReference type="Gramene" id="AT3G14000.1">
    <property type="protein sequence ID" value="AT3G14000.1"/>
    <property type="gene ID" value="AT3G14000"/>
</dbReference>
<dbReference type="Gramene" id="AT3G14000.2">
    <property type="protein sequence ID" value="AT3G14000.2"/>
    <property type="gene ID" value="AT3G14000"/>
</dbReference>
<dbReference type="KEGG" id="ath:AT3G14000"/>
<dbReference type="Araport" id="AT3G14000"/>
<dbReference type="TAIR" id="AT3G14000">
    <property type="gene designation" value="ATBRXL2"/>
</dbReference>
<dbReference type="eggNOG" id="ENOG502QTYG">
    <property type="taxonomic scope" value="Eukaryota"/>
</dbReference>
<dbReference type="HOGENOM" id="CLU_033380_0_1_1"/>
<dbReference type="InParanoid" id="Q8GYL9"/>
<dbReference type="OMA" id="TPRFRGG"/>
<dbReference type="OrthoDB" id="10250282at2759"/>
<dbReference type="PhylomeDB" id="Q8GYL9"/>
<dbReference type="PRO" id="PR:Q8GYL9"/>
<dbReference type="Proteomes" id="UP000006548">
    <property type="component" value="Chromosome 3"/>
</dbReference>
<dbReference type="ExpressionAtlas" id="Q8GYL9">
    <property type="expression patterns" value="baseline and differential"/>
</dbReference>
<dbReference type="GO" id="GO:0005634">
    <property type="term" value="C:nucleus"/>
    <property type="evidence" value="ECO:0007669"/>
    <property type="project" value="UniProtKB-SubCell"/>
</dbReference>
<dbReference type="InterPro" id="IPR013591">
    <property type="entry name" value="Brevis_radix_dom"/>
</dbReference>
<dbReference type="InterPro" id="IPR044532">
    <property type="entry name" value="BRX-like"/>
</dbReference>
<dbReference type="InterPro" id="IPR027988">
    <property type="entry name" value="BRX_N"/>
</dbReference>
<dbReference type="PANTHER" id="PTHR46058">
    <property type="entry name" value="PROTEIN BREVIS RADIX-LIKE 1"/>
    <property type="match status" value="1"/>
</dbReference>
<dbReference type="PANTHER" id="PTHR46058:SF35">
    <property type="entry name" value="PROTEIN BREVIS RADIX-LIKE 2"/>
    <property type="match status" value="1"/>
</dbReference>
<dbReference type="Pfam" id="PF08381">
    <property type="entry name" value="BRX"/>
    <property type="match status" value="2"/>
</dbReference>
<dbReference type="Pfam" id="PF13713">
    <property type="entry name" value="BRX_N"/>
    <property type="match status" value="1"/>
</dbReference>
<dbReference type="PROSITE" id="PS51514">
    <property type="entry name" value="BRX"/>
    <property type="match status" value="2"/>
</dbReference>
<protein>
    <recommendedName>
        <fullName>Protein Brevis radix-like 2</fullName>
        <shortName>AtBRXL2</shortName>
    </recommendedName>
</protein>